<reference key="1">
    <citation type="journal article" date="2003" name="Nature">
        <title>The genome of a motile marine Synechococcus.</title>
        <authorList>
            <person name="Palenik B."/>
            <person name="Brahamsha B."/>
            <person name="Larimer F.W."/>
            <person name="Land M.L."/>
            <person name="Hauser L."/>
            <person name="Chain P."/>
            <person name="Lamerdin J.E."/>
            <person name="Regala W."/>
            <person name="Allen E.E."/>
            <person name="McCarren J."/>
            <person name="Paulsen I.T."/>
            <person name="Dufresne A."/>
            <person name="Partensky F."/>
            <person name="Webb E.A."/>
            <person name="Waterbury J."/>
        </authorList>
    </citation>
    <scope>NUCLEOTIDE SEQUENCE [LARGE SCALE GENOMIC DNA]</scope>
    <source>
        <strain>WH8102</strain>
    </source>
</reference>
<evidence type="ECO:0000255" key="1">
    <source>
        <dbReference type="HAMAP-Rule" id="MF_00094"/>
    </source>
</evidence>
<protein>
    <recommendedName>
        <fullName evidence="1">Peptide chain release factor 2</fullName>
        <shortName evidence="1">RF-2</shortName>
    </recommendedName>
</protein>
<organism>
    <name type="scientific">Parasynechococcus marenigrum (strain WH8102)</name>
    <dbReference type="NCBI Taxonomy" id="84588"/>
    <lineage>
        <taxon>Bacteria</taxon>
        <taxon>Bacillati</taxon>
        <taxon>Cyanobacteriota</taxon>
        <taxon>Cyanophyceae</taxon>
        <taxon>Synechococcales</taxon>
        <taxon>Prochlorococcaceae</taxon>
        <taxon>Parasynechococcus</taxon>
        <taxon>Parasynechococcus marenigrum</taxon>
    </lineage>
</organism>
<comment type="function">
    <text evidence="1">Peptide chain release factor 2 directs the termination of translation in response to the peptide chain termination codons UGA and UAA.</text>
</comment>
<comment type="subcellular location">
    <subcellularLocation>
        <location evidence="1">Cytoplasm</location>
    </subcellularLocation>
</comment>
<comment type="PTM">
    <text evidence="1">Methylated by PrmC. Methylation increases the termination efficiency of RF2.</text>
</comment>
<comment type="similarity">
    <text evidence="1">Belongs to the prokaryotic/mitochondrial release factor family.</text>
</comment>
<feature type="chain" id="PRO_1000005017" description="Peptide chain release factor 2">
    <location>
        <begin position="1"/>
        <end position="374"/>
    </location>
</feature>
<feature type="modified residue" description="N5-methylglutamine" evidence="1">
    <location>
        <position position="251"/>
    </location>
</feature>
<name>RF2_PARMW</name>
<sequence length="374" mass="41776">MDLTDFKRDLSELTDRLGHAQDCLDVPALKARQQDLEQLAAQPDFWDDQQAAQKQMRRLDEVKAQLQQLADWGGAVDDAKATLELYELEPDEEMLTEAQEGLNQLRQGLDRWELERLLSGDYDKEGAVLTINAGAGGTDAQDWAQMLLRMYTRWAEDHGMKVTVDELSEGEEAGIKSCTIEVEGRYAYGYLRNEKGTHRLVRISPFNANDKRQTSFAGIEVMPKIDEEVDIDIPEKDLEVTTSRSGGAGGQNVNKVETAVRILHIPTGLAVRCTQERSQLQNKEKAMALLKAKLLVIAQEQRAAEIADIRGDIVEAAWGNQIRNYVFHPYQMVKDLRTSEETNDVQAVMDGALDPFIDASLRQGVDSPGADADS</sequence>
<keyword id="KW-0963">Cytoplasm</keyword>
<keyword id="KW-0488">Methylation</keyword>
<keyword id="KW-0648">Protein biosynthesis</keyword>
<dbReference type="EMBL" id="BX569695">
    <property type="protein sequence ID" value="CAE08826.1"/>
    <property type="molecule type" value="Genomic_DNA"/>
</dbReference>
<dbReference type="SMR" id="Q7U3W6"/>
<dbReference type="STRING" id="84588.SYNW2311"/>
<dbReference type="KEGG" id="syw:SYNW2311"/>
<dbReference type="eggNOG" id="COG1186">
    <property type="taxonomic scope" value="Bacteria"/>
</dbReference>
<dbReference type="HOGENOM" id="CLU_220736_1_0_3"/>
<dbReference type="Proteomes" id="UP000001422">
    <property type="component" value="Chromosome"/>
</dbReference>
<dbReference type="GO" id="GO:0005737">
    <property type="term" value="C:cytoplasm"/>
    <property type="evidence" value="ECO:0007669"/>
    <property type="project" value="UniProtKB-SubCell"/>
</dbReference>
<dbReference type="GO" id="GO:0016149">
    <property type="term" value="F:translation release factor activity, codon specific"/>
    <property type="evidence" value="ECO:0007669"/>
    <property type="project" value="UniProtKB-UniRule"/>
</dbReference>
<dbReference type="FunFam" id="3.30.160.20:FF:000004">
    <property type="entry name" value="Peptide chain release factor 1"/>
    <property type="match status" value="1"/>
</dbReference>
<dbReference type="Gene3D" id="3.30.160.20">
    <property type="match status" value="1"/>
</dbReference>
<dbReference type="Gene3D" id="3.30.70.1660">
    <property type="match status" value="1"/>
</dbReference>
<dbReference type="Gene3D" id="1.20.58.410">
    <property type="entry name" value="Release factor"/>
    <property type="match status" value="1"/>
</dbReference>
<dbReference type="HAMAP" id="MF_00094">
    <property type="entry name" value="Rel_fac_2"/>
    <property type="match status" value="1"/>
</dbReference>
<dbReference type="InterPro" id="IPR005139">
    <property type="entry name" value="PCRF"/>
</dbReference>
<dbReference type="InterPro" id="IPR000352">
    <property type="entry name" value="Pep_chain_release_fac_I"/>
</dbReference>
<dbReference type="InterPro" id="IPR045853">
    <property type="entry name" value="Pep_chain_release_fac_I_sf"/>
</dbReference>
<dbReference type="InterPro" id="IPR004374">
    <property type="entry name" value="PrfB"/>
</dbReference>
<dbReference type="NCBIfam" id="TIGR00020">
    <property type="entry name" value="prfB"/>
    <property type="match status" value="1"/>
</dbReference>
<dbReference type="PANTHER" id="PTHR43116:SF3">
    <property type="entry name" value="CLASS I PEPTIDE CHAIN RELEASE FACTOR"/>
    <property type="match status" value="1"/>
</dbReference>
<dbReference type="PANTHER" id="PTHR43116">
    <property type="entry name" value="PEPTIDE CHAIN RELEASE FACTOR 2"/>
    <property type="match status" value="1"/>
</dbReference>
<dbReference type="Pfam" id="PF03462">
    <property type="entry name" value="PCRF"/>
    <property type="match status" value="1"/>
</dbReference>
<dbReference type="Pfam" id="PF00472">
    <property type="entry name" value="RF-1"/>
    <property type="match status" value="1"/>
</dbReference>
<dbReference type="SMART" id="SM00937">
    <property type="entry name" value="PCRF"/>
    <property type="match status" value="1"/>
</dbReference>
<dbReference type="SUPFAM" id="SSF75620">
    <property type="entry name" value="Release factor"/>
    <property type="match status" value="1"/>
</dbReference>
<dbReference type="PROSITE" id="PS00745">
    <property type="entry name" value="RF_PROK_I"/>
    <property type="match status" value="1"/>
</dbReference>
<gene>
    <name evidence="1" type="primary">prfB</name>
    <name type="ordered locus">SYNW2311</name>
</gene>
<proteinExistence type="inferred from homology"/>
<accession>Q7U3W6</accession>